<accession>P0CO50</accession>
<accession>Q55MT9</accession>
<accession>Q5KB66</accession>
<feature type="chain" id="PRO_0000278342" description="ATP-dependent DNA helicase II subunit 1">
    <location>
        <begin position="1"/>
        <end position="751"/>
    </location>
</feature>
<feature type="domain" description="Ku">
    <location>
        <begin position="295"/>
        <end position="587"/>
    </location>
</feature>
<feature type="region of interest" description="Disordered" evidence="2">
    <location>
        <begin position="381"/>
        <end position="423"/>
    </location>
</feature>
<feature type="compositionally biased region" description="Basic and acidic residues" evidence="2">
    <location>
        <begin position="391"/>
        <end position="403"/>
    </location>
</feature>
<feature type="compositionally biased region" description="Acidic residues" evidence="2">
    <location>
        <begin position="404"/>
        <end position="415"/>
    </location>
</feature>
<evidence type="ECO:0000250" key="1"/>
<evidence type="ECO:0000256" key="2">
    <source>
        <dbReference type="SAM" id="MobiDB-lite"/>
    </source>
</evidence>
<evidence type="ECO:0000305" key="3"/>
<name>KU70_CRYNJ</name>
<reference key="1">
    <citation type="journal article" date="2005" name="Science">
        <title>The genome of the basidiomycetous yeast and human pathogen Cryptococcus neoformans.</title>
        <authorList>
            <person name="Loftus B.J."/>
            <person name="Fung E."/>
            <person name="Roncaglia P."/>
            <person name="Rowley D."/>
            <person name="Amedeo P."/>
            <person name="Bruno D."/>
            <person name="Vamathevan J."/>
            <person name="Miranda M."/>
            <person name="Anderson I.J."/>
            <person name="Fraser J.A."/>
            <person name="Allen J.E."/>
            <person name="Bosdet I.E."/>
            <person name="Brent M.R."/>
            <person name="Chiu R."/>
            <person name="Doering T.L."/>
            <person name="Donlin M.J."/>
            <person name="D'Souza C.A."/>
            <person name="Fox D.S."/>
            <person name="Grinberg V."/>
            <person name="Fu J."/>
            <person name="Fukushima M."/>
            <person name="Haas B.J."/>
            <person name="Huang J.C."/>
            <person name="Janbon G."/>
            <person name="Jones S.J.M."/>
            <person name="Koo H.L."/>
            <person name="Krzywinski M.I."/>
            <person name="Kwon-Chung K.J."/>
            <person name="Lengeler K.B."/>
            <person name="Maiti R."/>
            <person name="Marra M.A."/>
            <person name="Marra R.E."/>
            <person name="Mathewson C.A."/>
            <person name="Mitchell T.G."/>
            <person name="Pertea M."/>
            <person name="Riggs F.R."/>
            <person name="Salzberg S.L."/>
            <person name="Schein J.E."/>
            <person name="Shvartsbeyn A."/>
            <person name="Shin H."/>
            <person name="Shumway M."/>
            <person name="Specht C.A."/>
            <person name="Suh B.B."/>
            <person name="Tenney A."/>
            <person name="Utterback T.R."/>
            <person name="Wickes B.L."/>
            <person name="Wortman J.R."/>
            <person name="Wye N.H."/>
            <person name="Kronstad J.W."/>
            <person name="Lodge J.K."/>
            <person name="Heitman J."/>
            <person name="Davis R.W."/>
            <person name="Fraser C.M."/>
            <person name="Hyman R.W."/>
        </authorList>
    </citation>
    <scope>NUCLEOTIDE SEQUENCE [LARGE SCALE GENOMIC DNA]</scope>
    <source>
        <strain>JEC21 / ATCC MYA-565</strain>
    </source>
</reference>
<keyword id="KW-0067">ATP-binding</keyword>
<keyword id="KW-0158">Chromosome</keyword>
<keyword id="KW-0227">DNA damage</keyword>
<keyword id="KW-0233">DNA recombination</keyword>
<keyword id="KW-0234">DNA repair</keyword>
<keyword id="KW-0238">DNA-binding</keyword>
<keyword id="KW-0347">Helicase</keyword>
<keyword id="KW-0378">Hydrolase</keyword>
<keyword id="KW-0547">Nucleotide-binding</keyword>
<keyword id="KW-0539">Nucleus</keyword>
<keyword id="KW-1185">Reference proteome</keyword>
<keyword id="KW-0779">Telomere</keyword>
<gene>
    <name type="primary">KU70</name>
    <name type="ordered locus">CNI03620</name>
</gene>
<proteinExistence type="inferred from homology"/>
<comment type="function">
    <text evidence="1">Single-stranded DNA-dependent ATP-dependent helicase. Involved in non-homologous end joining (NHEJ) DNA double strand break repair. DNA-binding is sequence-independent but has a high affinity to nicks in double-stranded DNA and to the ends of duplex DNA. Binds to naturally occurring chromosomal ends, and therefore provides chromosomal end protection. Required also for telomere recombination to repair telomeric ends in the absence of telomerase. KU70, of the KU70/KU80 heterodimer, binds to the stem loop of TLC1, the RNA component of telomerase. Involved in telomere maintenance. Interacts with telomeric repeats and subtelomeric sequences thereby controlling telomere length and protecting against subtelomeric rearrangement. Maintains telomeric chromatin, which is involved in silencing the expression of genes located at the telomere. Required for mating-type switching (By similarity).</text>
</comment>
<comment type="catalytic activity">
    <reaction>
        <text>ATP + H2O = ADP + phosphate + H(+)</text>
        <dbReference type="Rhea" id="RHEA:13065"/>
        <dbReference type="ChEBI" id="CHEBI:15377"/>
        <dbReference type="ChEBI" id="CHEBI:15378"/>
        <dbReference type="ChEBI" id="CHEBI:30616"/>
        <dbReference type="ChEBI" id="CHEBI:43474"/>
        <dbReference type="ChEBI" id="CHEBI:456216"/>
        <dbReference type="EC" id="3.6.4.12"/>
    </reaction>
</comment>
<comment type="subunit">
    <text evidence="1">Heterodimer of Ku70 and Ku80.</text>
</comment>
<comment type="subcellular location">
    <subcellularLocation>
        <location evidence="1">Nucleus</location>
    </subcellularLocation>
    <subcellularLocation>
        <location evidence="1">Chromosome</location>
        <location evidence="1">Telomere</location>
    </subcellularLocation>
</comment>
<comment type="similarity">
    <text evidence="3">Belongs to the ku70 family.</text>
</comment>
<sequence length="751" mass="85324">MSSYYNKGDAPSWEALDQDGLDDVIDTSEYAYASRDHILFCIDAAQSMHKPYPDTTDESGQLVRGRSALHQALDVAQQIQRAKVLSGPDDSVGLLLYNVDPSAVAEDPGNYQPGNYVFQTLRTINAEEMKRLVKLMQTAKEQYEAQDDDETVETTEPEILRKTFPPIEESHEMNIANVIQTCNFLFRDGGTQLRGNKRVFWITDNDMPPGMNNRQPARTSYGDLTTYGVTAETFFIDRPDHRFNPNIFWNDILDREAIDYNDDQPDPEGLSSLADLMKDLVIKTSPKRTHFHVPLKLGKDGEIVIGVSGCSMVSEQGKGASRYVKMRGQVVEEVQSKTEYTSAETGAVLKDSEIGQAYEFGNEAEVRNILEPNPWEAHVKERAKNQNAVDHVLEDDKERRQREDEGEDLEEEEEDDKKGVEKWMGKQKAALPKIVARTRLQFSNEEVSQFRSMGIEPQIKVLGFQAASQLRFQDNLKHPFFIYPNEEEYTGSTRTFAALLNSCLKYNRHALALCRLRSNHVPEFCVLIPQEEKTSSNGQEYPPGFHLIILPYKDSIRPPPKKVAEFLQSPPIATDEQINAMKAVIKRTRFKAAAYRPEIYPNPSLAYHYDQLQALAFEEDWDPEDPAKQALDKTMPLYGGMHSRAGEFMEEFNKEIENDERAVEKLAAPTKRGKAEKETTVNEWDLRNIPDMWKKGTLSQCKVQELKDWAKHYHVPLQGKTKKADIIDVVSEHLSTSEDDLAGASSKKAKK</sequence>
<dbReference type="EC" id="3.6.4.12"/>
<dbReference type="EMBL" id="AE017349">
    <property type="protein sequence ID" value="AAW45709.2"/>
    <property type="molecule type" value="Genomic_DNA"/>
</dbReference>
<dbReference type="RefSeq" id="XP_573016.1">
    <property type="nucleotide sequence ID" value="XM_573016.1"/>
</dbReference>
<dbReference type="SMR" id="P0CO50"/>
<dbReference type="FunCoup" id="P0CO50">
    <property type="interactions" value="623"/>
</dbReference>
<dbReference type="STRING" id="214684.P0CO50"/>
<dbReference type="PaxDb" id="214684-P0CO50"/>
<dbReference type="eggNOG" id="KOG2327">
    <property type="taxonomic scope" value="Eukaryota"/>
</dbReference>
<dbReference type="HOGENOM" id="CLU_014815_3_0_1"/>
<dbReference type="InParanoid" id="P0CO50"/>
<dbReference type="Proteomes" id="UP000002149">
    <property type="component" value="Chromosome 9"/>
</dbReference>
<dbReference type="GO" id="GO:0000781">
    <property type="term" value="C:chromosome, telomeric region"/>
    <property type="evidence" value="ECO:0007669"/>
    <property type="project" value="UniProtKB-SubCell"/>
</dbReference>
<dbReference type="GO" id="GO:0043564">
    <property type="term" value="C:Ku70:Ku80 complex"/>
    <property type="evidence" value="ECO:0000318"/>
    <property type="project" value="GO_Central"/>
</dbReference>
<dbReference type="GO" id="GO:0005524">
    <property type="term" value="F:ATP binding"/>
    <property type="evidence" value="ECO:0007669"/>
    <property type="project" value="UniProtKB-KW"/>
</dbReference>
<dbReference type="GO" id="GO:0016887">
    <property type="term" value="F:ATP hydrolysis activity"/>
    <property type="evidence" value="ECO:0007669"/>
    <property type="project" value="RHEA"/>
</dbReference>
<dbReference type="GO" id="GO:0003684">
    <property type="term" value="F:damaged DNA binding"/>
    <property type="evidence" value="ECO:0007669"/>
    <property type="project" value="InterPro"/>
</dbReference>
<dbReference type="GO" id="GO:0003678">
    <property type="term" value="F:DNA helicase activity"/>
    <property type="evidence" value="ECO:0007669"/>
    <property type="project" value="InterPro"/>
</dbReference>
<dbReference type="GO" id="GO:0042162">
    <property type="term" value="F:telomeric DNA binding"/>
    <property type="evidence" value="ECO:0000318"/>
    <property type="project" value="GO_Central"/>
</dbReference>
<dbReference type="GO" id="GO:0006310">
    <property type="term" value="P:DNA recombination"/>
    <property type="evidence" value="ECO:0007669"/>
    <property type="project" value="UniProtKB-KW"/>
</dbReference>
<dbReference type="GO" id="GO:0006303">
    <property type="term" value="P:double-strand break repair via nonhomologous end joining"/>
    <property type="evidence" value="ECO:0000318"/>
    <property type="project" value="GO_Central"/>
</dbReference>
<dbReference type="GO" id="GO:0000723">
    <property type="term" value="P:telomere maintenance"/>
    <property type="evidence" value="ECO:0000318"/>
    <property type="project" value="GO_Central"/>
</dbReference>
<dbReference type="CDD" id="cd00788">
    <property type="entry name" value="KU70"/>
    <property type="match status" value="1"/>
</dbReference>
<dbReference type="Gene3D" id="1.10.1600.10">
    <property type="match status" value="1"/>
</dbReference>
<dbReference type="Gene3D" id="2.40.290.10">
    <property type="match status" value="1"/>
</dbReference>
<dbReference type="Gene3D" id="1.10.720.30">
    <property type="entry name" value="SAP domain"/>
    <property type="match status" value="1"/>
</dbReference>
<dbReference type="Gene3D" id="3.40.50.410">
    <property type="entry name" value="von Willebrand factor, type A domain"/>
    <property type="match status" value="1"/>
</dbReference>
<dbReference type="InterPro" id="IPR006165">
    <property type="entry name" value="Ku70"/>
</dbReference>
<dbReference type="InterPro" id="IPR006164">
    <property type="entry name" value="Ku70/Ku80_beta-barrel_dom"/>
</dbReference>
<dbReference type="InterPro" id="IPR047087">
    <property type="entry name" value="KU70_core_dom"/>
</dbReference>
<dbReference type="InterPro" id="IPR005160">
    <property type="entry name" value="Ku_C"/>
</dbReference>
<dbReference type="InterPro" id="IPR005161">
    <property type="entry name" value="Ku_N"/>
</dbReference>
<dbReference type="InterPro" id="IPR036361">
    <property type="entry name" value="SAP_dom_sf"/>
</dbReference>
<dbReference type="InterPro" id="IPR016194">
    <property type="entry name" value="SPOC-like_C_dom_sf"/>
</dbReference>
<dbReference type="InterPro" id="IPR036465">
    <property type="entry name" value="vWFA_dom_sf"/>
</dbReference>
<dbReference type="PANTHER" id="PTHR12604">
    <property type="entry name" value="KU AUTOANTIGEN DNA HELICASE"/>
    <property type="match status" value="1"/>
</dbReference>
<dbReference type="PANTHER" id="PTHR12604:SF2">
    <property type="entry name" value="X-RAY REPAIR CROSS-COMPLEMENTING PROTEIN 6"/>
    <property type="match status" value="1"/>
</dbReference>
<dbReference type="Pfam" id="PF02735">
    <property type="entry name" value="Ku"/>
    <property type="match status" value="1"/>
</dbReference>
<dbReference type="Pfam" id="PF03730">
    <property type="entry name" value="Ku_C"/>
    <property type="match status" value="1"/>
</dbReference>
<dbReference type="Pfam" id="PF03731">
    <property type="entry name" value="Ku_N"/>
    <property type="match status" value="1"/>
</dbReference>
<dbReference type="PIRSF" id="PIRSF003033">
    <property type="entry name" value="Ku70"/>
    <property type="match status" value="1"/>
</dbReference>
<dbReference type="SMART" id="SM00559">
    <property type="entry name" value="Ku78"/>
    <property type="match status" value="1"/>
</dbReference>
<dbReference type="SUPFAM" id="SSF68906">
    <property type="entry name" value="SAP domain"/>
    <property type="match status" value="1"/>
</dbReference>
<dbReference type="SUPFAM" id="SSF100939">
    <property type="entry name" value="SPOC domain-like"/>
    <property type="match status" value="1"/>
</dbReference>
<dbReference type="SUPFAM" id="SSF53300">
    <property type="entry name" value="vWA-like"/>
    <property type="match status" value="1"/>
</dbReference>
<organism>
    <name type="scientific">Cryptococcus neoformans var. neoformans serotype D (strain JEC21 / ATCC MYA-565)</name>
    <name type="common">Filobasidiella neoformans</name>
    <dbReference type="NCBI Taxonomy" id="214684"/>
    <lineage>
        <taxon>Eukaryota</taxon>
        <taxon>Fungi</taxon>
        <taxon>Dikarya</taxon>
        <taxon>Basidiomycota</taxon>
        <taxon>Agaricomycotina</taxon>
        <taxon>Tremellomycetes</taxon>
        <taxon>Tremellales</taxon>
        <taxon>Cryptococcaceae</taxon>
        <taxon>Cryptococcus</taxon>
        <taxon>Cryptococcus neoformans species complex</taxon>
    </lineage>
</organism>
<protein>
    <recommendedName>
        <fullName>ATP-dependent DNA helicase II subunit 1</fullName>
        <ecNumber>3.6.4.12</ecNumber>
    </recommendedName>
    <alternativeName>
        <fullName>ATP-dependent DNA helicase II subunit Ku70</fullName>
    </alternativeName>
</protein>